<keyword id="KW-0040">ANK repeat</keyword>
<keyword id="KW-1185">Reference proteome</keyword>
<keyword id="KW-0677">Repeat</keyword>
<reference key="1">
    <citation type="journal article" date="2022" name="J. Infect. Dis.">
        <title>Exportation of Monkeypox virus from the African continent.</title>
        <authorList>
            <person name="Mauldin M.R."/>
            <person name="McCollum A.M."/>
            <person name="Nakazawa Y.J."/>
            <person name="Mandra A."/>
            <person name="Whitehouse E.R."/>
            <person name="Davidson W."/>
            <person name="Zhao H."/>
            <person name="Gao J."/>
            <person name="Li Y."/>
            <person name="Doty J."/>
            <person name="Yinka-Ogunleye A."/>
            <person name="Akinpelu A."/>
            <person name="Aruna O."/>
            <person name="Naidoo D."/>
            <person name="Lewandowski K."/>
            <person name="Afrough B."/>
            <person name="Graham V."/>
            <person name="Aarons E."/>
            <person name="Hewson R."/>
            <person name="Vipond R."/>
            <person name="Dunning J."/>
            <person name="Chand M."/>
            <person name="Brown C."/>
            <person name="Cohen-Gihon I."/>
            <person name="Erez N."/>
            <person name="Shifman O."/>
            <person name="Israeli O."/>
            <person name="Sharon M."/>
            <person name="Schwartz E."/>
            <person name="Beth-Din A."/>
            <person name="Zvi A."/>
            <person name="Mak T.M."/>
            <person name="Ng Y.K."/>
            <person name="Cui L."/>
            <person name="Lin R.T.P."/>
            <person name="Olson V.A."/>
            <person name="Brooks T."/>
            <person name="Paran N."/>
            <person name="Ihekweazu C."/>
            <person name="Reynolds M.G."/>
        </authorList>
    </citation>
    <scope>NUCLEOTIDE SEQUENCE [LARGE SCALE GENOMIC DNA]</scope>
    <source>
        <strain>MPXV-M5312_HM12_Rivers</strain>
    </source>
</reference>
<dbReference type="EMBL" id="MT903340">
    <property type="protein sequence ID" value="QNP12877.1"/>
    <property type="molecule type" value="Genomic_DNA"/>
</dbReference>
<dbReference type="EMBL" id="MT903340">
    <property type="protein sequence ID" value="QNP13053.1"/>
    <property type="molecule type" value="Genomic_DNA"/>
</dbReference>
<dbReference type="RefSeq" id="YP_010377004.1">
    <property type="nucleotide sequence ID" value="NC_063383.1"/>
</dbReference>
<dbReference type="RefSeq" id="YP_010377180.1">
    <property type="nucleotide sequence ID" value="NC_063383.1"/>
</dbReference>
<dbReference type="SMR" id="A0A7H0DNH0"/>
<dbReference type="GeneID" id="72551419"/>
<dbReference type="GeneID" id="72551593"/>
<dbReference type="Proteomes" id="UP000516359">
    <property type="component" value="Genome"/>
</dbReference>
<dbReference type="Gene3D" id="1.25.40.20">
    <property type="entry name" value="Ankyrin repeat-containing domain"/>
    <property type="match status" value="2"/>
</dbReference>
<dbReference type="InterPro" id="IPR002110">
    <property type="entry name" value="Ankyrin_rpt"/>
</dbReference>
<dbReference type="InterPro" id="IPR036770">
    <property type="entry name" value="Ankyrin_rpt-contain_sf"/>
</dbReference>
<dbReference type="InterPro" id="IPR018272">
    <property type="entry name" value="PRANC_domain"/>
</dbReference>
<dbReference type="PANTHER" id="PTHR24118">
    <property type="entry name" value="POTE ANKYRIN DOMAIN"/>
    <property type="match status" value="1"/>
</dbReference>
<dbReference type="PANTHER" id="PTHR24118:SF99">
    <property type="entry name" value="POTE ANKYRIN DOMAIN FAMILY MEMBER 3C-RELATED"/>
    <property type="match status" value="1"/>
</dbReference>
<dbReference type="Pfam" id="PF00023">
    <property type="entry name" value="Ank"/>
    <property type="match status" value="1"/>
</dbReference>
<dbReference type="Pfam" id="PF12796">
    <property type="entry name" value="Ank_2"/>
    <property type="match status" value="1"/>
</dbReference>
<dbReference type="Pfam" id="PF09372">
    <property type="entry name" value="PRANC"/>
    <property type="match status" value="1"/>
</dbReference>
<dbReference type="SMART" id="SM00248">
    <property type="entry name" value="ANK"/>
    <property type="match status" value="6"/>
</dbReference>
<dbReference type="SUPFAM" id="SSF48403">
    <property type="entry name" value="Ankyrin repeat"/>
    <property type="match status" value="1"/>
</dbReference>
<dbReference type="PROSITE" id="PS50297">
    <property type="entry name" value="ANK_REP_REGION"/>
    <property type="match status" value="1"/>
</dbReference>
<dbReference type="PROSITE" id="PS50088">
    <property type="entry name" value="ANK_REPEAT"/>
    <property type="match status" value="2"/>
</dbReference>
<comment type="function">
    <text evidence="1">May be involved in virus-host protein interaction through the ankyrin repeats and PRANC regions.</text>
</comment>
<comment type="similarity">
    <text evidence="2">Belongs to the orthopoxvirus OPG003 family.</text>
</comment>
<evidence type="ECO:0000250" key="1">
    <source>
        <dbReference type="UniProtKB" id="Q76QY7"/>
    </source>
</evidence>
<evidence type="ECO:0000305" key="2"/>
<proteinExistence type="inferred from homology"/>
<organismHost>
    <name type="scientific">Cynomys gunnisoni</name>
    <name type="common">Gunnison's prairie dog</name>
    <name type="synonym">Spermophilus gunnisoni</name>
    <dbReference type="NCBI Taxonomy" id="45479"/>
</organismHost>
<organismHost>
    <name type="scientific">Cynomys leucurus</name>
    <name type="common">White-tailed prairie dog</name>
    <dbReference type="NCBI Taxonomy" id="99825"/>
</organismHost>
<organismHost>
    <name type="scientific">Cynomys ludovicianus</name>
    <name type="common">Black-tailed prairie dog</name>
    <dbReference type="NCBI Taxonomy" id="45480"/>
</organismHost>
<organismHost>
    <name type="scientific">Cynomys mexicanus</name>
    <name type="common">Mexican prairie dog</name>
    <dbReference type="NCBI Taxonomy" id="99826"/>
</organismHost>
<organismHost>
    <name type="scientific">Cynomys parvidens</name>
    <name type="common">Utah prairie dog</name>
    <dbReference type="NCBI Taxonomy" id="99827"/>
</organismHost>
<organismHost>
    <name type="scientific">Gliridae</name>
    <name type="common">dormice</name>
    <dbReference type="NCBI Taxonomy" id="30650"/>
</organismHost>
<organismHost>
    <name type="scientific">Heliosciurus ruwenzorii</name>
    <name type="common">Ruwenzori sun squirrel</name>
    <dbReference type="NCBI Taxonomy" id="226685"/>
</organismHost>
<organismHost>
    <name type="scientific">Homo sapiens</name>
    <name type="common">Human</name>
    <dbReference type="NCBI Taxonomy" id="9606"/>
</organismHost>
<organismHost>
    <name type="scientific">Mus musculus</name>
    <name type="common">Mouse</name>
    <dbReference type="NCBI Taxonomy" id="10090"/>
</organismHost>
<accession>A0A7H0DNH0</accession>
<organism>
    <name type="scientific">Monkeypox virus</name>
    <dbReference type="NCBI Taxonomy" id="10244"/>
    <lineage>
        <taxon>Viruses</taxon>
        <taxon>Varidnaviria</taxon>
        <taxon>Bamfordvirae</taxon>
        <taxon>Nucleocytoviricota</taxon>
        <taxon>Pokkesviricetes</taxon>
        <taxon>Chitovirales</taxon>
        <taxon>Poxviridae</taxon>
        <taxon>Chordopoxvirinae</taxon>
        <taxon>Orthopoxvirus</taxon>
    </lineage>
</organism>
<sequence length="588" mass="69237">MDEMDEIVRIVNDSMWYVPNAFMDDGDNEGHISVNNVCHMYLAFFDVDISSHLFKLVIKHCDLNKRLKCGNSPLHCYTMNTRFNPSVLKILLRHGMRNFDSKDKKGHIPLHHYLIHSLSIDNKIFDILTDPIDDFSKSSDLLLCYLRYKFNGSLNYYVLYKLLTKGSDPNCVDEDGLTSLHYYCKHISAFHESNYYKSKSHTKMRAEKRFIYAIIDHGANINAVTKIGNTPLHTYLQQYTKHSPRVVYALLSRGADTRIRNNLDCTPIMEYIKNDCATGHILIMLLNWHEQKYGKLQKEEGQHLLYLFIKHNQGYGSRSLNILRYLLDRFDIQKDEYYNTMTPLHTAFQNCNNNVASYLVYIGYDINLPTKDDKTVFDLVFENRNIIYKADVVNDIIHHRLKVSLPMIKSLFYKMSEFSPYDDHYVKKIIAYCLLRDESFAELHTKFCLNEDYKSVFMKNISFDKIDSIIEKCSRDISLLKEIRISDTDLYTVLRTEDIRYHTYLEAIHSDKRISFPMYDDLIEQCHLSMEHKSKLVDKALNKLESTIDSQSRLSYLPPEIMRNIITKLSDYHLNSMLYGKNHYKYYP</sequence>
<protein>
    <recommendedName>
        <fullName>Ankyrin repeat protein OPG003</fullName>
    </recommendedName>
</protein>
<feature type="chain" id="PRO_0000457184" description="Ankyrin repeat protein OPG003">
    <location>
        <begin position="1"/>
        <end position="588"/>
    </location>
</feature>
<feature type="repeat" description="ANK 1" evidence="1">
    <location>
        <begin position="69"/>
        <end position="101"/>
    </location>
</feature>
<feature type="repeat" description="ANK 2" evidence="1">
    <location>
        <begin position="175"/>
        <end position="223"/>
    </location>
</feature>
<feature type="repeat" description="ANK 3" evidence="1">
    <location>
        <begin position="227"/>
        <end position="259"/>
    </location>
</feature>
<feature type="repeat" description="ANK 4" evidence="1">
    <location>
        <begin position="300"/>
        <end position="336"/>
    </location>
</feature>
<feature type="repeat" description="ANK 5" evidence="1">
    <location>
        <begin position="339"/>
        <end position="368"/>
    </location>
</feature>
<feature type="region of interest" description="PRANC/F-box-like" evidence="1">
    <location>
        <begin position="557"/>
        <end position="574"/>
    </location>
</feature>
<name>PG003_MONPV</name>
<gene>
    <name type="primary">OPG003</name>
    <name type="ORF">MPXVgp002</name>
</gene>